<gene>
    <name evidence="1" type="primary">plsX</name>
    <name type="ordered locus">SCH_1140</name>
</gene>
<comment type="function">
    <text evidence="1">Catalyzes the reversible formation of acyl-phosphate (acyl-PO(4)) from acyl-[acyl-carrier-protein] (acyl-ACP). This enzyme utilizes acyl-ACP as fatty acyl donor, but not acyl-CoA.</text>
</comment>
<comment type="catalytic activity">
    <reaction evidence="1">
        <text>a fatty acyl-[ACP] + phosphate = an acyl phosphate + holo-[ACP]</text>
        <dbReference type="Rhea" id="RHEA:42292"/>
        <dbReference type="Rhea" id="RHEA-COMP:9685"/>
        <dbReference type="Rhea" id="RHEA-COMP:14125"/>
        <dbReference type="ChEBI" id="CHEBI:43474"/>
        <dbReference type="ChEBI" id="CHEBI:59918"/>
        <dbReference type="ChEBI" id="CHEBI:64479"/>
        <dbReference type="ChEBI" id="CHEBI:138651"/>
        <dbReference type="EC" id="2.3.1.274"/>
    </reaction>
</comment>
<comment type="pathway">
    <text evidence="1">Lipid metabolism; phospholipid metabolism.</text>
</comment>
<comment type="subunit">
    <text evidence="1">Homodimer. Probably interacts with PlsY.</text>
</comment>
<comment type="subcellular location">
    <subcellularLocation>
        <location evidence="1">Cytoplasm</location>
    </subcellularLocation>
    <text evidence="1">Associated with the membrane possibly through PlsY.</text>
</comment>
<comment type="similarity">
    <text evidence="1">Belongs to the PlsX family.</text>
</comment>
<accession>Q57QG5</accession>
<keyword id="KW-0963">Cytoplasm</keyword>
<keyword id="KW-0444">Lipid biosynthesis</keyword>
<keyword id="KW-0443">Lipid metabolism</keyword>
<keyword id="KW-0594">Phospholipid biosynthesis</keyword>
<keyword id="KW-1208">Phospholipid metabolism</keyword>
<keyword id="KW-0808">Transferase</keyword>
<evidence type="ECO:0000255" key="1">
    <source>
        <dbReference type="HAMAP-Rule" id="MF_00019"/>
    </source>
</evidence>
<protein>
    <recommendedName>
        <fullName evidence="1">Phosphate acyltransferase</fullName>
        <ecNumber evidence="1">2.3.1.274</ecNumber>
    </recommendedName>
    <alternativeName>
        <fullName evidence="1">Acyl-ACP phosphotransacylase</fullName>
    </alternativeName>
    <alternativeName>
        <fullName evidence="1">Acyl-[acyl-carrier-protein]--phosphate acyltransferase</fullName>
    </alternativeName>
    <alternativeName>
        <fullName evidence="1">Phosphate-acyl-ACP acyltransferase</fullName>
    </alternativeName>
</protein>
<dbReference type="EC" id="2.3.1.274" evidence="1"/>
<dbReference type="EMBL" id="AE017220">
    <property type="protein sequence ID" value="AAX65046.1"/>
    <property type="molecule type" value="Genomic_DNA"/>
</dbReference>
<dbReference type="RefSeq" id="WP_001518286.1">
    <property type="nucleotide sequence ID" value="NC_006905.1"/>
</dbReference>
<dbReference type="SMR" id="Q57QG5"/>
<dbReference type="KEGG" id="sec:SCH_1140"/>
<dbReference type="HOGENOM" id="CLU_039379_1_0_6"/>
<dbReference type="UniPathway" id="UPA00085"/>
<dbReference type="Proteomes" id="UP000000538">
    <property type="component" value="Chromosome"/>
</dbReference>
<dbReference type="GO" id="GO:0005737">
    <property type="term" value="C:cytoplasm"/>
    <property type="evidence" value="ECO:0007669"/>
    <property type="project" value="UniProtKB-SubCell"/>
</dbReference>
<dbReference type="GO" id="GO:0043811">
    <property type="term" value="F:phosphate:acyl-[acyl carrier protein] acyltransferase activity"/>
    <property type="evidence" value="ECO:0007669"/>
    <property type="project" value="UniProtKB-UniRule"/>
</dbReference>
<dbReference type="GO" id="GO:0006633">
    <property type="term" value="P:fatty acid biosynthetic process"/>
    <property type="evidence" value="ECO:0007669"/>
    <property type="project" value="UniProtKB-UniRule"/>
</dbReference>
<dbReference type="GO" id="GO:0008654">
    <property type="term" value="P:phospholipid biosynthetic process"/>
    <property type="evidence" value="ECO:0007669"/>
    <property type="project" value="UniProtKB-KW"/>
</dbReference>
<dbReference type="FunFam" id="3.40.718.10:FF:000008">
    <property type="entry name" value="Phosphate acyltransferase"/>
    <property type="match status" value="1"/>
</dbReference>
<dbReference type="Gene3D" id="3.40.718.10">
    <property type="entry name" value="Isopropylmalate Dehydrogenase"/>
    <property type="match status" value="1"/>
</dbReference>
<dbReference type="HAMAP" id="MF_00019">
    <property type="entry name" value="PlsX"/>
    <property type="match status" value="1"/>
</dbReference>
<dbReference type="InterPro" id="IPR003664">
    <property type="entry name" value="FA_synthesis"/>
</dbReference>
<dbReference type="InterPro" id="IPR012281">
    <property type="entry name" value="Phospholipid_synth_PlsX-like"/>
</dbReference>
<dbReference type="NCBIfam" id="TIGR00182">
    <property type="entry name" value="plsX"/>
    <property type="match status" value="1"/>
</dbReference>
<dbReference type="PANTHER" id="PTHR30100">
    <property type="entry name" value="FATTY ACID/PHOSPHOLIPID SYNTHESIS PROTEIN PLSX"/>
    <property type="match status" value="1"/>
</dbReference>
<dbReference type="PANTHER" id="PTHR30100:SF1">
    <property type="entry name" value="PHOSPHATE ACYLTRANSFERASE"/>
    <property type="match status" value="1"/>
</dbReference>
<dbReference type="Pfam" id="PF02504">
    <property type="entry name" value="FA_synthesis"/>
    <property type="match status" value="1"/>
</dbReference>
<dbReference type="PIRSF" id="PIRSF002465">
    <property type="entry name" value="Phsphlp_syn_PlsX"/>
    <property type="match status" value="1"/>
</dbReference>
<dbReference type="SUPFAM" id="SSF53659">
    <property type="entry name" value="Isocitrate/Isopropylmalate dehydrogenase-like"/>
    <property type="match status" value="1"/>
</dbReference>
<reference key="1">
    <citation type="journal article" date="2005" name="Nucleic Acids Res.">
        <title>The genome sequence of Salmonella enterica serovar Choleraesuis, a highly invasive and resistant zoonotic pathogen.</title>
        <authorList>
            <person name="Chiu C.-H."/>
            <person name="Tang P."/>
            <person name="Chu C."/>
            <person name="Hu S."/>
            <person name="Bao Q."/>
            <person name="Yu J."/>
            <person name="Chou Y.-Y."/>
            <person name="Wang H.-S."/>
            <person name="Lee Y.-S."/>
        </authorList>
    </citation>
    <scope>NUCLEOTIDE SEQUENCE [LARGE SCALE GENOMIC DNA]</scope>
    <source>
        <strain>SC-B67</strain>
    </source>
</reference>
<organism>
    <name type="scientific">Salmonella choleraesuis (strain SC-B67)</name>
    <dbReference type="NCBI Taxonomy" id="321314"/>
    <lineage>
        <taxon>Bacteria</taxon>
        <taxon>Pseudomonadati</taxon>
        <taxon>Pseudomonadota</taxon>
        <taxon>Gammaproteobacteria</taxon>
        <taxon>Enterobacterales</taxon>
        <taxon>Enterobacteriaceae</taxon>
        <taxon>Salmonella</taxon>
    </lineage>
</organism>
<feature type="chain" id="PRO_1000001821" description="Phosphate acyltransferase">
    <location>
        <begin position="1"/>
        <end position="359"/>
    </location>
</feature>
<name>PLSX_SALCH</name>
<proteinExistence type="inferred from homology"/>
<sequence length="359" mass="38716">MTRLTLALDVMGGDFGPSVTVPAALQALNANSQLTLLLVGNPDIITPLLAKADFEQRSRLQIIPAQSVIASDARPSQAIRASRGTSMRVALELVKEGRAEACVSAGNTGALMGLAKLLLKPLEGIERPALVTVLPHQQKGKTVVLDLGANVDCDSTMLVQFAVMGAVLAEEVVGIKNPRVALLNIGEEETKGLDSIREASLMLKTVPTINYIGYLEANELLTGKTDVLVCDGFTGNVTLKTMEGVVRMFLSLLKSQGEGKKRSWWLLLLKRWLQKSLTRRFSHLNPDQYNGACLLGLRGTVIKSHGAANQRAFAVAIEQAVQAVQRQVPQRIAARLESVYPAGFEPLDDGKGVNLRAHR</sequence>